<protein>
    <recommendedName>
        <fullName>GTP cyclohydrolase 1 type 2 homolog</fullName>
    </recommendedName>
</protein>
<gene>
    <name type="ordered locus">PM0183</name>
</gene>
<proteinExistence type="inferred from homology"/>
<reference key="1">
    <citation type="journal article" date="2001" name="Proc. Natl. Acad. Sci. U.S.A.">
        <title>Complete genomic sequence of Pasteurella multocida Pm70.</title>
        <authorList>
            <person name="May B.J."/>
            <person name="Zhang Q."/>
            <person name="Li L.L."/>
            <person name="Paustian M.L."/>
            <person name="Whittam T.S."/>
            <person name="Kapur V."/>
        </authorList>
    </citation>
    <scope>NUCLEOTIDE SEQUENCE [LARGE SCALE GENOMIC DNA]</scope>
    <source>
        <strain>Pm70</strain>
    </source>
</reference>
<dbReference type="EMBL" id="AE004439">
    <property type="protein sequence ID" value="AAK02267.1"/>
    <property type="molecule type" value="Genomic_DNA"/>
</dbReference>
<dbReference type="RefSeq" id="WP_005720561.1">
    <property type="nucleotide sequence ID" value="NC_002663.1"/>
</dbReference>
<dbReference type="SMR" id="Q9CP72"/>
<dbReference type="STRING" id="272843.PM0183"/>
<dbReference type="EnsemblBacteria" id="AAK02267">
    <property type="protein sequence ID" value="AAK02267"/>
    <property type="gene ID" value="PM0183"/>
</dbReference>
<dbReference type="KEGG" id="pmu:PM0183"/>
<dbReference type="HOGENOM" id="CLU_037423_3_0_6"/>
<dbReference type="OrthoDB" id="9800881at2"/>
<dbReference type="Proteomes" id="UP000000809">
    <property type="component" value="Chromosome"/>
</dbReference>
<dbReference type="GO" id="GO:0005737">
    <property type="term" value="C:cytoplasm"/>
    <property type="evidence" value="ECO:0007669"/>
    <property type="project" value="TreeGrafter"/>
</dbReference>
<dbReference type="GO" id="GO:0046872">
    <property type="term" value="F:metal ion binding"/>
    <property type="evidence" value="ECO:0007669"/>
    <property type="project" value="UniProtKB-KW"/>
</dbReference>
<dbReference type="FunFam" id="3.40.1390.30:FF:000002">
    <property type="entry name" value="Nif3-like dinuclear metal center protein"/>
    <property type="match status" value="1"/>
</dbReference>
<dbReference type="Gene3D" id="3.40.1390.30">
    <property type="entry name" value="NIF3 (NGG1p interacting factor 3)-like"/>
    <property type="match status" value="2"/>
</dbReference>
<dbReference type="InterPro" id="IPR002678">
    <property type="entry name" value="DUF34/NIF3"/>
</dbReference>
<dbReference type="InterPro" id="IPR036069">
    <property type="entry name" value="DUF34/NIF3_sf"/>
</dbReference>
<dbReference type="NCBIfam" id="TIGR00486">
    <property type="entry name" value="YbgI_SA1388"/>
    <property type="match status" value="1"/>
</dbReference>
<dbReference type="PANTHER" id="PTHR13799:SF14">
    <property type="entry name" value="GTP CYCLOHYDROLASE 1 TYPE 2 HOMOLOG"/>
    <property type="match status" value="1"/>
</dbReference>
<dbReference type="PANTHER" id="PTHR13799">
    <property type="entry name" value="NGG1 INTERACTING FACTOR 3"/>
    <property type="match status" value="1"/>
</dbReference>
<dbReference type="Pfam" id="PF01784">
    <property type="entry name" value="DUF34_NIF3"/>
    <property type="match status" value="1"/>
</dbReference>
<dbReference type="SUPFAM" id="SSF102705">
    <property type="entry name" value="NIF3 (NGG1p interacting factor 3)-like"/>
    <property type="match status" value="1"/>
</dbReference>
<feature type="chain" id="PRO_0000147322" description="GTP cyclohydrolase 1 type 2 homolog">
    <location>
        <begin position="1"/>
        <end position="251"/>
    </location>
</feature>
<feature type="binding site" evidence="1">
    <location>
        <position position="63"/>
    </location>
    <ligand>
        <name>a divalent metal cation</name>
        <dbReference type="ChEBI" id="CHEBI:60240"/>
        <label>1</label>
    </ligand>
</feature>
<feature type="binding site" evidence="1">
    <location>
        <position position="64"/>
    </location>
    <ligand>
        <name>a divalent metal cation</name>
        <dbReference type="ChEBI" id="CHEBI:60240"/>
        <label>2</label>
    </ligand>
</feature>
<feature type="binding site" evidence="1">
    <location>
        <position position="101"/>
    </location>
    <ligand>
        <name>a divalent metal cation</name>
        <dbReference type="ChEBI" id="CHEBI:60240"/>
        <label>1</label>
    </ligand>
</feature>
<feature type="binding site" evidence="1">
    <location>
        <position position="219"/>
    </location>
    <ligand>
        <name>a divalent metal cation</name>
        <dbReference type="ChEBI" id="CHEBI:60240"/>
        <label>2</label>
    </ligand>
</feature>
<feature type="binding site" evidence="1">
    <location>
        <position position="223"/>
    </location>
    <ligand>
        <name>a divalent metal cation</name>
        <dbReference type="ChEBI" id="CHEBI:60240"/>
        <label>1</label>
    </ligand>
</feature>
<feature type="binding site" evidence="1">
    <location>
        <position position="223"/>
    </location>
    <ligand>
        <name>a divalent metal cation</name>
        <dbReference type="ChEBI" id="CHEBI:60240"/>
        <label>2</label>
    </ligand>
</feature>
<evidence type="ECO:0000250" key="1">
    <source>
        <dbReference type="UniProtKB" id="P0AFP6"/>
    </source>
</evidence>
<evidence type="ECO:0000305" key="2"/>
<comment type="subunit">
    <text evidence="1">Homohexamer.</text>
</comment>
<comment type="similarity">
    <text evidence="2">Belongs to the GTP cyclohydrolase I type 2/NIF3 family.</text>
</comment>
<keyword id="KW-0479">Metal-binding</keyword>
<keyword id="KW-1185">Reference proteome</keyword>
<accession>Q9CP72</accession>
<name>GCH1L_PASMU</name>
<sequence>MNALELEQILNHKLNSQAISDYAPNGLQVEGKKDIKKIITGVTASQALIEYAVSQNADAILVHHGYFWKSENPCIRGMKGKRIKTLLVNDINLYGYHLPLDVHPELGNNARLAALLEIEDLQPLEQGTVSIPVYGTLKTPLTSDAFAARIEQVLKRKPLVCSDNAPHLIRTVGICTGGGQSYIDLAANQGVDAFISGEVSEQTIHSAREQGIHFFAAGHHATERYGIKALGEWLSQHYDLEVEFKDIDNPA</sequence>
<organism>
    <name type="scientific">Pasteurella multocida (strain Pm70)</name>
    <dbReference type="NCBI Taxonomy" id="272843"/>
    <lineage>
        <taxon>Bacteria</taxon>
        <taxon>Pseudomonadati</taxon>
        <taxon>Pseudomonadota</taxon>
        <taxon>Gammaproteobacteria</taxon>
        <taxon>Pasteurellales</taxon>
        <taxon>Pasteurellaceae</taxon>
        <taxon>Pasteurella</taxon>
    </lineage>
</organism>